<accession>P92976</accession>
<accession>Q0WLG6</accession>
<accession>Q9C9C1</accession>
<feature type="signal peptide" evidence="1">
    <location>
        <begin position="1"/>
        <end position="23"/>
    </location>
</feature>
<feature type="chain" id="PRO_0000033331" description="Protein STRICTOSIDINE SYNTHASE-LIKE 11">
    <location>
        <begin position="24"/>
        <end position="329"/>
    </location>
</feature>
<feature type="glycosylation site" description="N-linked (GlcNAc...) asparagine" evidence="2">
    <location>
        <position position="37"/>
    </location>
</feature>
<feature type="glycosylation site" description="N-linked (GlcNAc...) asparagine" evidence="2">
    <location>
        <position position="79"/>
    </location>
</feature>
<feature type="sequence conflict" description="In Ref. 1; AAB40595." evidence="5" ref="1">
    <original>YT</original>
    <variation>LP</variation>
    <location>
        <begin position="54"/>
        <end position="55"/>
    </location>
</feature>
<feature type="sequence conflict" description="In Ref. 1; AAB40595." evidence="5" ref="1">
    <original>T</original>
    <variation>N</variation>
    <location>
        <position position="155"/>
    </location>
</feature>
<feature type="sequence conflict" description="In Ref. 1; AAB40595." evidence="5" ref="1">
    <original>E</original>
    <variation>D</variation>
    <location>
        <position position="201"/>
    </location>
</feature>
<keyword id="KW-0017">Alkaloid metabolism</keyword>
<keyword id="KW-0325">Glycoprotein</keyword>
<keyword id="KW-0378">Hydrolase</keyword>
<keyword id="KW-1185">Reference proteome</keyword>
<keyword id="KW-0732">Signal</keyword>
<keyword id="KW-0926">Vacuole</keyword>
<reference key="1">
    <citation type="submission" date="1995-12" db="EMBL/GenBank/DDBJ databases">
        <authorList>
            <person name="Jain A.K."/>
            <person name="Nessler C.L."/>
        </authorList>
    </citation>
    <scope>NUCLEOTIDE SEQUENCE [MRNA]</scope>
    <source>
        <strain>cv. Landsberg erecta</strain>
    </source>
</reference>
<reference key="2">
    <citation type="journal article" date="2000" name="Nature">
        <title>Sequence and analysis of chromosome 1 of the plant Arabidopsis thaliana.</title>
        <authorList>
            <person name="Theologis A."/>
            <person name="Ecker J.R."/>
            <person name="Palm C.J."/>
            <person name="Federspiel N.A."/>
            <person name="Kaul S."/>
            <person name="White O."/>
            <person name="Alonso J."/>
            <person name="Altafi H."/>
            <person name="Araujo R."/>
            <person name="Bowman C.L."/>
            <person name="Brooks S.Y."/>
            <person name="Buehler E."/>
            <person name="Chan A."/>
            <person name="Chao Q."/>
            <person name="Chen H."/>
            <person name="Cheuk R.F."/>
            <person name="Chin C.W."/>
            <person name="Chung M.K."/>
            <person name="Conn L."/>
            <person name="Conway A.B."/>
            <person name="Conway A.R."/>
            <person name="Creasy T.H."/>
            <person name="Dewar K."/>
            <person name="Dunn P."/>
            <person name="Etgu P."/>
            <person name="Feldblyum T.V."/>
            <person name="Feng J.-D."/>
            <person name="Fong B."/>
            <person name="Fujii C.Y."/>
            <person name="Gill J.E."/>
            <person name="Goldsmith A.D."/>
            <person name="Haas B."/>
            <person name="Hansen N.F."/>
            <person name="Hughes B."/>
            <person name="Huizar L."/>
            <person name="Hunter J.L."/>
            <person name="Jenkins J."/>
            <person name="Johnson-Hopson C."/>
            <person name="Khan S."/>
            <person name="Khaykin E."/>
            <person name="Kim C.J."/>
            <person name="Koo H.L."/>
            <person name="Kremenetskaia I."/>
            <person name="Kurtz D.B."/>
            <person name="Kwan A."/>
            <person name="Lam B."/>
            <person name="Langin-Hooper S."/>
            <person name="Lee A."/>
            <person name="Lee J.M."/>
            <person name="Lenz C.A."/>
            <person name="Li J.H."/>
            <person name="Li Y.-P."/>
            <person name="Lin X."/>
            <person name="Liu S.X."/>
            <person name="Liu Z.A."/>
            <person name="Luros J.S."/>
            <person name="Maiti R."/>
            <person name="Marziali A."/>
            <person name="Militscher J."/>
            <person name="Miranda M."/>
            <person name="Nguyen M."/>
            <person name="Nierman W.C."/>
            <person name="Osborne B.I."/>
            <person name="Pai G."/>
            <person name="Peterson J."/>
            <person name="Pham P.K."/>
            <person name="Rizzo M."/>
            <person name="Rooney T."/>
            <person name="Rowley D."/>
            <person name="Sakano H."/>
            <person name="Salzberg S.L."/>
            <person name="Schwartz J.R."/>
            <person name="Shinn P."/>
            <person name="Southwick A.M."/>
            <person name="Sun H."/>
            <person name="Tallon L.J."/>
            <person name="Tambunga G."/>
            <person name="Toriumi M.J."/>
            <person name="Town C.D."/>
            <person name="Utterback T."/>
            <person name="Van Aken S."/>
            <person name="Vaysberg M."/>
            <person name="Vysotskaia V.S."/>
            <person name="Walker M."/>
            <person name="Wu D."/>
            <person name="Yu G."/>
            <person name="Fraser C.M."/>
            <person name="Venter J.C."/>
            <person name="Davis R.W."/>
        </authorList>
    </citation>
    <scope>NUCLEOTIDE SEQUENCE [LARGE SCALE GENOMIC DNA]</scope>
    <source>
        <strain>cv. Columbia</strain>
    </source>
</reference>
<reference key="3">
    <citation type="journal article" date="2017" name="Plant J.">
        <title>Araport11: a complete reannotation of the Arabidopsis thaliana reference genome.</title>
        <authorList>
            <person name="Cheng C.Y."/>
            <person name="Krishnakumar V."/>
            <person name="Chan A.P."/>
            <person name="Thibaud-Nissen F."/>
            <person name="Schobel S."/>
            <person name="Town C.D."/>
        </authorList>
    </citation>
    <scope>GENOME REANNOTATION</scope>
    <source>
        <strain>cv. Columbia</strain>
    </source>
</reference>
<reference key="4">
    <citation type="submission" date="2006-07" db="EMBL/GenBank/DDBJ databases">
        <title>Large-scale analysis of RIKEN Arabidopsis full-length (RAFL) cDNAs.</title>
        <authorList>
            <person name="Totoki Y."/>
            <person name="Seki M."/>
            <person name="Ishida J."/>
            <person name="Nakajima M."/>
            <person name="Enju A."/>
            <person name="Kamiya A."/>
            <person name="Narusaka M."/>
            <person name="Shin-i T."/>
            <person name="Nakagawa M."/>
            <person name="Sakamoto N."/>
            <person name="Oishi K."/>
            <person name="Kohara Y."/>
            <person name="Kobayashi M."/>
            <person name="Toyoda A."/>
            <person name="Sakaki Y."/>
            <person name="Sakurai T."/>
            <person name="Iida K."/>
            <person name="Akiyama K."/>
            <person name="Satou M."/>
            <person name="Toyoda T."/>
            <person name="Konagaya A."/>
            <person name="Carninci P."/>
            <person name="Kawai J."/>
            <person name="Hayashizaki Y."/>
            <person name="Shinozaki K."/>
        </authorList>
    </citation>
    <scope>NUCLEOTIDE SEQUENCE [LARGE SCALE MRNA]</scope>
    <source>
        <strain>cv. Columbia</strain>
    </source>
</reference>
<reference key="5">
    <citation type="journal article" date="2000" name="Biochem. Biophys. Res. Commun.">
        <title>Animal and plant members of a gene family with similarity to alkaloid-synthesizing enzymes.</title>
        <authorList>
            <person name="Fabbri M."/>
            <person name="Delp G."/>
            <person name="Schmidt O."/>
            <person name="Theopold U."/>
        </authorList>
    </citation>
    <scope>GENE FAMILY</scope>
    <scope>NOMENCLATURE</scope>
</reference>
<reference key="6">
    <citation type="journal article" date="2009" name="Plant Biol.">
        <title>Phylogenetic and transcriptional analysis of a strictosidine synthase-like gene family in Arabidopsis thaliana reveals involvement in plant defence responses.</title>
        <authorList>
            <person name="Sohani M.M."/>
            <person name="Schenk P.M."/>
            <person name="Schultz C.J."/>
            <person name="Schmidt O."/>
        </authorList>
    </citation>
    <scope>GENE FAMILY</scope>
    <source>
        <strain>cv. Columbia</strain>
    </source>
</reference>
<gene>
    <name evidence="3" type="primary">SSL11</name>
    <name evidence="4" type="synonym">SS12</name>
    <name type="synonym">SS3</name>
    <name evidence="6" type="ordered locus">At1g74000</name>
    <name evidence="7" type="ORF">F2P9.13</name>
</gene>
<protein>
    <recommendedName>
        <fullName evidence="3">Protein STRICTOSIDINE SYNTHASE-LIKE 11</fullName>
        <shortName evidence="3">AtSSL11</shortName>
        <ecNumber>3.5.99.13</ecNumber>
    </recommendedName>
    <alternativeName>
        <fullName evidence="4">Strictosidine synthase 12</fullName>
        <shortName evidence="4">AtSS12</shortName>
    </alternativeName>
    <alternativeName>
        <fullName>Strictosidine synthase 3</fullName>
        <shortName>SS-3</shortName>
    </alternativeName>
</protein>
<organism>
    <name type="scientific">Arabidopsis thaliana</name>
    <name type="common">Mouse-ear cress</name>
    <dbReference type="NCBI Taxonomy" id="3702"/>
    <lineage>
        <taxon>Eukaryota</taxon>
        <taxon>Viridiplantae</taxon>
        <taxon>Streptophyta</taxon>
        <taxon>Embryophyta</taxon>
        <taxon>Tracheophyta</taxon>
        <taxon>Spermatophyta</taxon>
        <taxon>Magnoliopsida</taxon>
        <taxon>eudicotyledons</taxon>
        <taxon>Gunneridae</taxon>
        <taxon>Pentapetalae</taxon>
        <taxon>rosids</taxon>
        <taxon>malvids</taxon>
        <taxon>Brassicales</taxon>
        <taxon>Brassicaceae</taxon>
        <taxon>Camelineae</taxon>
        <taxon>Arabidopsis</taxon>
    </lineage>
</organism>
<name>SSL11_ARATH</name>
<evidence type="ECO:0000250" key="1"/>
<evidence type="ECO:0000255" key="2">
    <source>
        <dbReference type="PROSITE-ProRule" id="PRU00498"/>
    </source>
</evidence>
<evidence type="ECO:0000303" key="3">
    <source>
    </source>
</evidence>
<evidence type="ECO:0000303" key="4">
    <source>
    </source>
</evidence>
<evidence type="ECO:0000305" key="5"/>
<evidence type="ECO:0000312" key="6">
    <source>
        <dbReference type="Araport" id="AT1G74000"/>
    </source>
</evidence>
<evidence type="ECO:0000312" key="7">
    <source>
        <dbReference type="EMBL" id="AAG52519.1"/>
    </source>
</evidence>
<sequence length="329" mass="34667">MMRSFVSLISLLLLLSFSSSVLSTKKSSFQKLPVPGNRTGPEAFAFDSTGKGFYTGVTGGKILKYLPKKGYVDFAQITNSSKSSLCDGALGTTNVEKCGRPAGIAFNTKTGDLYVADAALGLHVIPRRGGLAKKIADSVGGKPFLFLDGLDVDPTTGVVYFTSFSSTFGPRDVLKAVATKDSTGKFFKYDPSKKVVTVLMEGLSGSAGCAVSSDGSFVLVGQFTKSNIKRYWIKGSKAGTSEDFTNSVSNPDNIKRIGSTGNFWVASVVNSATGPTNPSAVKVSSAGKVLQTIPLKDKFGDTLVSEVNEYKGQLYIGALFGPFAGILKL</sequence>
<dbReference type="EC" id="3.5.99.13"/>
<dbReference type="EMBL" id="U43946">
    <property type="protein sequence ID" value="AAB40595.1"/>
    <property type="status" value="ALT_FRAME"/>
    <property type="molecule type" value="mRNA"/>
</dbReference>
<dbReference type="EMBL" id="AC016662">
    <property type="protein sequence ID" value="AAG52519.1"/>
    <property type="molecule type" value="Genomic_DNA"/>
</dbReference>
<dbReference type="EMBL" id="CP002684">
    <property type="protein sequence ID" value="AEE35536.1"/>
    <property type="molecule type" value="Genomic_DNA"/>
</dbReference>
<dbReference type="EMBL" id="AK230236">
    <property type="protein sequence ID" value="BAF02041.1"/>
    <property type="molecule type" value="mRNA"/>
</dbReference>
<dbReference type="PIR" id="G96767">
    <property type="entry name" value="G96767"/>
</dbReference>
<dbReference type="RefSeq" id="NP_177540.3">
    <property type="nucleotide sequence ID" value="NM_106059.5"/>
</dbReference>
<dbReference type="SMR" id="P92976"/>
<dbReference type="FunCoup" id="P92976">
    <property type="interactions" value="37"/>
</dbReference>
<dbReference type="STRING" id="3702.P92976"/>
<dbReference type="GlyCosmos" id="P92976">
    <property type="glycosylation" value="2 sites, No reported glycans"/>
</dbReference>
<dbReference type="GlyGen" id="P92976">
    <property type="glycosylation" value="3 sites"/>
</dbReference>
<dbReference type="PaxDb" id="3702-AT1G74000.1"/>
<dbReference type="ProteomicsDB" id="228376"/>
<dbReference type="EnsemblPlants" id="AT1G74000.1">
    <property type="protein sequence ID" value="AT1G74000.1"/>
    <property type="gene ID" value="AT1G74000"/>
</dbReference>
<dbReference type="GeneID" id="843738"/>
<dbReference type="Gramene" id="AT1G74000.1">
    <property type="protein sequence ID" value="AT1G74000.1"/>
    <property type="gene ID" value="AT1G74000"/>
</dbReference>
<dbReference type="KEGG" id="ath:AT1G74000"/>
<dbReference type="Araport" id="AT1G74000"/>
<dbReference type="TAIR" id="AT1G74000">
    <property type="gene designation" value="SS3"/>
</dbReference>
<dbReference type="eggNOG" id="KOG1520">
    <property type="taxonomic scope" value="Eukaryota"/>
</dbReference>
<dbReference type="HOGENOM" id="CLU_023267_2_1_1"/>
<dbReference type="InParanoid" id="P92976"/>
<dbReference type="OMA" id="HVMVSHT"/>
<dbReference type="PhylomeDB" id="P92976"/>
<dbReference type="BioCyc" id="ARA:AT1G74000-MONOMER"/>
<dbReference type="UniPathway" id="UPA00311">
    <property type="reaction ID" value="UER00447"/>
</dbReference>
<dbReference type="CD-CODE" id="4299E36E">
    <property type="entry name" value="Nucleolus"/>
</dbReference>
<dbReference type="PRO" id="PR:P92976"/>
<dbReference type="Proteomes" id="UP000006548">
    <property type="component" value="Chromosome 1"/>
</dbReference>
<dbReference type="ExpressionAtlas" id="P92976">
    <property type="expression patterns" value="baseline and differential"/>
</dbReference>
<dbReference type="GO" id="GO:0009505">
    <property type="term" value="C:plant-type cell wall"/>
    <property type="evidence" value="ECO:0007005"/>
    <property type="project" value="TAIR"/>
</dbReference>
<dbReference type="GO" id="GO:0005773">
    <property type="term" value="C:vacuole"/>
    <property type="evidence" value="ECO:0007669"/>
    <property type="project" value="UniProtKB-SubCell"/>
</dbReference>
<dbReference type="GO" id="GO:0016844">
    <property type="term" value="F:strictosidine synthase activity"/>
    <property type="evidence" value="ECO:0000250"/>
    <property type="project" value="TAIR"/>
</dbReference>
<dbReference type="GO" id="GO:0009820">
    <property type="term" value="P:alkaloid metabolic process"/>
    <property type="evidence" value="ECO:0007669"/>
    <property type="project" value="UniProtKB-KW"/>
</dbReference>
<dbReference type="FunFam" id="2.120.10.30:FF:000084">
    <property type="entry name" value="Protein STRICTOSIDINE SYNTHASE-LIKE 12"/>
    <property type="match status" value="1"/>
</dbReference>
<dbReference type="Gene3D" id="2.120.10.30">
    <property type="entry name" value="TolB, C-terminal domain"/>
    <property type="match status" value="1"/>
</dbReference>
<dbReference type="InterPro" id="IPR011042">
    <property type="entry name" value="6-blade_b-propeller_TolB-like"/>
</dbReference>
<dbReference type="InterPro" id="IPR018119">
    <property type="entry name" value="Strictosidine_synth_cons-reg"/>
</dbReference>
<dbReference type="PANTHER" id="PTHR10426:SF102">
    <property type="entry name" value="PROTEIN STRICTOSIDINE SYNTHASE-LIKE 11"/>
    <property type="match status" value="1"/>
</dbReference>
<dbReference type="PANTHER" id="PTHR10426">
    <property type="entry name" value="STRICTOSIDINE SYNTHASE-RELATED"/>
    <property type="match status" value="1"/>
</dbReference>
<dbReference type="Pfam" id="PF20067">
    <property type="entry name" value="SSL_N"/>
    <property type="match status" value="1"/>
</dbReference>
<dbReference type="Pfam" id="PF03088">
    <property type="entry name" value="Str_synth"/>
    <property type="match status" value="1"/>
</dbReference>
<dbReference type="SUPFAM" id="SSF63829">
    <property type="entry name" value="Calcium-dependent phosphotriesterase"/>
    <property type="match status" value="1"/>
</dbReference>
<proteinExistence type="evidence at transcript level"/>
<comment type="function">
    <text evidence="1">Catalyzes the stereospecific condensation of tryptamine with secologanin to form strictosidine, the key intermediate of indole alkaloid biosynthesis.</text>
</comment>
<comment type="catalytic activity">
    <reaction>
        <text>3alpha(S)-strictosidine + H2O = secologanin + tryptamine</text>
        <dbReference type="Rhea" id="RHEA:15013"/>
        <dbReference type="ChEBI" id="CHEBI:15377"/>
        <dbReference type="ChEBI" id="CHEBI:18002"/>
        <dbReference type="ChEBI" id="CHEBI:57887"/>
        <dbReference type="ChEBI" id="CHEBI:58193"/>
        <dbReference type="EC" id="3.5.99.13"/>
    </reaction>
</comment>
<comment type="pathway">
    <text>Alkaloid biosynthesis; 3alpha(S)-strictosidine biosynthesis; 3alpha(S)-strictosidine from secologanin and tryptamine: step 1/1.</text>
</comment>
<comment type="subcellular location">
    <subcellularLocation>
        <location evidence="1">Vacuole</location>
    </subcellularLocation>
</comment>
<comment type="similarity">
    <text evidence="5">Belongs to the strictosidine synthase family.</text>
</comment>
<comment type="caution">
    <text evidence="5">It is uncertain whether Met-1 or Met-2 is the initiator.</text>
</comment>
<comment type="sequence caution" evidence="5">
    <conflict type="frameshift">
        <sequence resource="EMBL-CDS" id="AAB40595"/>
    </conflict>
</comment>